<gene>
    <name type="primary">inuB</name>
</gene>
<organism>
    <name type="scientific">Aspergillus niger</name>
    <dbReference type="NCBI Taxonomy" id="5061"/>
    <lineage>
        <taxon>Eukaryota</taxon>
        <taxon>Fungi</taxon>
        <taxon>Dikarya</taxon>
        <taxon>Ascomycota</taxon>
        <taxon>Pezizomycotina</taxon>
        <taxon>Eurotiomycetes</taxon>
        <taxon>Eurotiomycetidae</taxon>
        <taxon>Eurotiales</taxon>
        <taxon>Aspergillaceae</taxon>
        <taxon>Aspergillus</taxon>
        <taxon>Aspergillus subgen. Circumdati</taxon>
    </lineage>
</organism>
<feature type="signal peptide" evidence="2">
    <location>
        <begin position="1"/>
        <end position="25"/>
    </location>
</feature>
<feature type="chain" id="PRO_5000049218" description="Extracellular endo-inulinase inuB">
    <location>
        <begin position="26"/>
        <end position="516"/>
    </location>
</feature>
<feature type="active site" evidence="1">
    <location>
        <position position="43"/>
    </location>
</feature>
<feature type="binding site" evidence="1">
    <location>
        <begin position="40"/>
        <end position="43"/>
    </location>
    <ligand>
        <name>substrate</name>
    </ligand>
</feature>
<feature type="binding site" evidence="1">
    <location>
        <position position="59"/>
    </location>
    <ligand>
        <name>substrate</name>
    </ligand>
</feature>
<feature type="binding site" evidence="1">
    <location>
        <position position="67"/>
    </location>
    <ligand>
        <name>substrate</name>
    </ligand>
</feature>
<feature type="binding site" evidence="1">
    <location>
        <begin position="99"/>
        <end position="100"/>
    </location>
    <ligand>
        <name>substrate</name>
    </ligand>
</feature>
<feature type="binding site" evidence="1">
    <location>
        <begin position="175"/>
        <end position="176"/>
    </location>
    <ligand>
        <name>substrate</name>
    </ligand>
</feature>
<feature type="binding site" evidence="1">
    <location>
        <position position="233"/>
    </location>
    <ligand>
        <name>substrate</name>
    </ligand>
</feature>
<feature type="glycosylation site" description="N-linked (GlcNAc...) asparagine" evidence="2">
    <location>
        <position position="109"/>
    </location>
</feature>
<feature type="glycosylation site" description="N-linked (GlcNAc...) asparagine" evidence="2">
    <location>
        <position position="372"/>
    </location>
</feature>
<feature type="glycosylation site" description="N-linked (GlcNAc...) asparagine" evidence="2">
    <location>
        <position position="419"/>
    </location>
</feature>
<feature type="glycosylation site" description="N-linked (GlcNAc...) asparagine" evidence="2">
    <location>
        <position position="424"/>
    </location>
</feature>
<accession>O74642</accession>
<proteinExistence type="evidence at protein level"/>
<keyword id="KW-0119">Carbohydrate metabolism</keyword>
<keyword id="KW-0325">Glycoprotein</keyword>
<keyword id="KW-0326">Glycosidase</keyword>
<keyword id="KW-0378">Hydrolase</keyword>
<keyword id="KW-0624">Polysaccharide degradation</keyword>
<keyword id="KW-0964">Secreted</keyword>
<keyword id="KW-0732">Signal</keyword>
<dbReference type="EC" id="3.2.1.7"/>
<dbReference type="EMBL" id="AB012772">
    <property type="protein sequence ID" value="BAA33798.1"/>
    <property type="molecule type" value="Genomic_DNA"/>
</dbReference>
<dbReference type="PIR" id="JE0301">
    <property type="entry name" value="JE0301"/>
</dbReference>
<dbReference type="SMR" id="O74642"/>
<dbReference type="CAZy" id="GH32">
    <property type="family name" value="Glycoside Hydrolase Family 32"/>
</dbReference>
<dbReference type="GlyCosmos" id="O74642">
    <property type="glycosylation" value="4 sites, No reported glycans"/>
</dbReference>
<dbReference type="VEuPathDB" id="FungiDB:An11g03200"/>
<dbReference type="VEuPathDB" id="FungiDB:ASPNIDRAFT2_1095959"/>
<dbReference type="VEuPathDB" id="FungiDB:ATCC64974_89460"/>
<dbReference type="VEuPathDB" id="FungiDB:M747DRAFT_330865"/>
<dbReference type="GO" id="GO:0005737">
    <property type="term" value="C:cytoplasm"/>
    <property type="evidence" value="ECO:0007669"/>
    <property type="project" value="TreeGrafter"/>
</dbReference>
<dbReference type="GO" id="GO:0005576">
    <property type="term" value="C:extracellular region"/>
    <property type="evidence" value="ECO:0007669"/>
    <property type="project" value="UniProtKB-SubCell"/>
</dbReference>
<dbReference type="GO" id="GO:0051670">
    <property type="term" value="F:inulinase activity"/>
    <property type="evidence" value="ECO:0007669"/>
    <property type="project" value="UniProtKB-EC"/>
</dbReference>
<dbReference type="GO" id="GO:0004575">
    <property type="term" value="F:sucrose alpha-glucosidase activity"/>
    <property type="evidence" value="ECO:0007669"/>
    <property type="project" value="TreeGrafter"/>
</dbReference>
<dbReference type="GO" id="GO:0000272">
    <property type="term" value="P:polysaccharide catabolic process"/>
    <property type="evidence" value="ECO:0007669"/>
    <property type="project" value="UniProtKB-KW"/>
</dbReference>
<dbReference type="GO" id="GO:0005987">
    <property type="term" value="P:sucrose catabolic process"/>
    <property type="evidence" value="ECO:0007669"/>
    <property type="project" value="TreeGrafter"/>
</dbReference>
<dbReference type="CDD" id="cd18622">
    <property type="entry name" value="GH32_Inu-like"/>
    <property type="match status" value="1"/>
</dbReference>
<dbReference type="FunFam" id="2.115.10.20:FF:000008">
    <property type="entry name" value="Extracellular endo-inulinase"/>
    <property type="match status" value="1"/>
</dbReference>
<dbReference type="FunFam" id="2.60.120.560:FF:000003">
    <property type="entry name" value="Extracellular exo-inulinase inuE"/>
    <property type="match status" value="1"/>
</dbReference>
<dbReference type="Gene3D" id="2.60.120.560">
    <property type="entry name" value="Exo-inulinase, domain 1"/>
    <property type="match status" value="1"/>
</dbReference>
<dbReference type="Gene3D" id="2.115.10.20">
    <property type="entry name" value="Glycosyl hydrolase domain, family 43"/>
    <property type="match status" value="1"/>
</dbReference>
<dbReference type="InterPro" id="IPR013320">
    <property type="entry name" value="ConA-like_dom_sf"/>
</dbReference>
<dbReference type="InterPro" id="IPR001362">
    <property type="entry name" value="Glyco_hydro_32"/>
</dbReference>
<dbReference type="InterPro" id="IPR013189">
    <property type="entry name" value="Glyco_hydro_32_C"/>
</dbReference>
<dbReference type="InterPro" id="IPR013148">
    <property type="entry name" value="Glyco_hydro_32_N"/>
</dbReference>
<dbReference type="InterPro" id="IPR023296">
    <property type="entry name" value="Glyco_hydro_beta-prop_sf"/>
</dbReference>
<dbReference type="PANTHER" id="PTHR42800">
    <property type="entry name" value="EXOINULINASE INUD (AFU_ORTHOLOGUE AFUA_5G00480)"/>
    <property type="match status" value="1"/>
</dbReference>
<dbReference type="PANTHER" id="PTHR42800:SF1">
    <property type="entry name" value="EXOINULINASE INUD (AFU_ORTHOLOGUE AFUA_5G00480)"/>
    <property type="match status" value="1"/>
</dbReference>
<dbReference type="Pfam" id="PF08244">
    <property type="entry name" value="Glyco_hydro_32C"/>
    <property type="match status" value="1"/>
</dbReference>
<dbReference type="Pfam" id="PF00251">
    <property type="entry name" value="Glyco_hydro_32N"/>
    <property type="match status" value="1"/>
</dbReference>
<dbReference type="SMART" id="SM00640">
    <property type="entry name" value="Glyco_32"/>
    <property type="match status" value="1"/>
</dbReference>
<dbReference type="SUPFAM" id="SSF75005">
    <property type="entry name" value="Arabinanase/levansucrase/invertase"/>
    <property type="match status" value="1"/>
</dbReference>
<dbReference type="SUPFAM" id="SSF49899">
    <property type="entry name" value="Concanavalin A-like lectins/glucanases"/>
    <property type="match status" value="1"/>
</dbReference>
<sequence>MLNPKVAYMVWMTCLGLTLPSQAQSNDYRPSYHFTPDQYWMNEPNGLIKIGSTWHLFFQHNPTANVWGNICWGHATSTDLMHWAYKPTAIADENGVEAFTGTAYYDPNNTSGLGDSANPPYLAWFTGYTTSSQTQDQRLAFSVDNGATWTKFQGNPIISTSQEAPHDITGGLESRDPKVFFHRQSGNWIMVLAHGGQDKLSFWTSADTIHWTWQSDLKSTSINGLSSDITGWEVPDMFELPVEGTGETTWVVMMTPAEGSPAGGNGVLAITGSFDGKTFTADPVDASTMWLDNGRDFDGALSWVNVPASDGRRIIAAVMNSYGSNPPTTTWKGMLSFPRTLSLKKVGTQQHFVQQPITELDTISTSMQTLANQTITPGQTLLSSIRGTALDVRVAFYPDAGSVLSLTVRKGASEQTVINYTQSNATLSVDRTESGDISYDPAAGGVHTAKLEEDGTGLVSIRVLVDTCSVEVFGGQGEAVISDLIFPSDSSDGLALEVTGGNAVLQSVDVRSVSLE</sequence>
<comment type="function">
    <text evidence="1">Endo-inulinase involved in utilization of the plant storage polymer inulin, consisting of fructooligosaccharides with a degree of polymerization (DP) value from 2 to 60.</text>
</comment>
<comment type="catalytic activity">
    <reaction>
        <text>Endohydrolysis of (2-&gt;1)-beta-D-fructosidic linkages in inulin.</text>
        <dbReference type="EC" id="3.2.1.7"/>
    </reaction>
</comment>
<comment type="subcellular location">
    <subcellularLocation>
        <location evidence="1">Secreted</location>
    </subcellularLocation>
</comment>
<comment type="biotechnology">
    <text evidence="3">Plays an important role in biofuel production. Pure nonhydrolyzed inulin can be directly converted to ethanol in a simultaneous saccharification and fermentation process when combining A.niger and S.cerevisiae. Endoinulinase can digest fructooligosaccharides with high degree of polymerization (DP) values (&gt;20) into short molecules that may be readily hydrolyzed by S.cerevisiae SUC2. Thus, introduction of an endoinulinase gene into S.cerevisiae will improve its inulin utilization and ethanol fermentation through collaboration between the heterologous endoinulinase and the invertase SUC2.</text>
</comment>
<comment type="similarity">
    <text evidence="4">Belongs to the glycosyl hydrolase 32 family.</text>
</comment>
<reference key="1">
    <citation type="journal article" date="1998" name="Biosci. Biotechnol. Biochem.">
        <title>Molecular cloning and sequence analysis of two endoinulinase genes from Aspergillus niger.</title>
        <authorList>
            <person name="Ohta K."/>
            <person name="Akimoto H."/>
            <person name="Matsuda S."/>
            <person name="Toshimitsu D."/>
            <person name="Nakamura T."/>
        </authorList>
    </citation>
    <scope>NUCLEOTIDE SEQUENCE [GENOMIC DNA]</scope>
    <source>
        <strain>12</strain>
    </source>
</reference>
<reference key="2">
    <citation type="journal article" date="1999" name="J. Biosci. Bioeng.">
        <title>Transcriptional analysis of two endoinulinase genes inuA and inuB in Aspergillus niger and nucleotide sequences of their promoter regions.</title>
        <authorList>
            <person name="Akimoto H."/>
            <person name="Kushima T."/>
            <person name="Nakamura T."/>
            <person name="Ohta K."/>
        </authorList>
    </citation>
    <scope>NUCLEOTIDE SEQUENCE [GENOMIC DNA]</scope>
    <source>
        <strain>12</strain>
    </source>
</reference>
<reference key="3">
    <citation type="journal article" date="1993" name="Appl. Environ. Microbiol.">
        <title>Production of high concentrations of ethanol from inulin by simultaneous saccharification and fermentation using Aspergillus niger and Saccharomyces cerevisiae.</title>
        <authorList>
            <person name="Ohta K."/>
            <person name="Hamada S."/>
            <person name="Nakamura T."/>
        </authorList>
    </citation>
    <scope>BIOTECHNOLOGY</scope>
</reference>
<evidence type="ECO:0000250" key="1"/>
<evidence type="ECO:0000255" key="2"/>
<evidence type="ECO:0000269" key="3">
    <source>
    </source>
</evidence>
<evidence type="ECO:0000305" key="4"/>
<name>INUB_ASPNG</name>
<protein>
    <recommendedName>
        <fullName>Extracellular endo-inulinase inuB</fullName>
        <ecNumber>3.2.1.7</ecNumber>
    </recommendedName>
</protein>